<dbReference type="EMBL" id="AE008923">
    <property type="protein sequence ID" value="AAM37821.1"/>
    <property type="molecule type" value="Genomic_DNA"/>
</dbReference>
<dbReference type="SMR" id="Q8PIC2"/>
<dbReference type="KEGG" id="xac:XAC2976"/>
<dbReference type="eggNOG" id="COG1660">
    <property type="taxonomic scope" value="Bacteria"/>
</dbReference>
<dbReference type="HOGENOM" id="CLU_059558_1_1_6"/>
<dbReference type="Proteomes" id="UP000000576">
    <property type="component" value="Chromosome"/>
</dbReference>
<dbReference type="GO" id="GO:0005524">
    <property type="term" value="F:ATP binding"/>
    <property type="evidence" value="ECO:0007669"/>
    <property type="project" value="UniProtKB-UniRule"/>
</dbReference>
<dbReference type="GO" id="GO:0005525">
    <property type="term" value="F:GTP binding"/>
    <property type="evidence" value="ECO:0007669"/>
    <property type="project" value="UniProtKB-UniRule"/>
</dbReference>
<dbReference type="HAMAP" id="MF_00636">
    <property type="entry name" value="RapZ_like"/>
    <property type="match status" value="1"/>
</dbReference>
<dbReference type="InterPro" id="IPR027417">
    <property type="entry name" value="P-loop_NTPase"/>
</dbReference>
<dbReference type="InterPro" id="IPR005337">
    <property type="entry name" value="RapZ-like"/>
</dbReference>
<dbReference type="InterPro" id="IPR053930">
    <property type="entry name" value="RapZ-like_N"/>
</dbReference>
<dbReference type="InterPro" id="IPR053931">
    <property type="entry name" value="RapZ_C"/>
</dbReference>
<dbReference type="NCBIfam" id="NF003828">
    <property type="entry name" value="PRK05416.1"/>
    <property type="match status" value="1"/>
</dbReference>
<dbReference type="PANTHER" id="PTHR30448">
    <property type="entry name" value="RNASE ADAPTER PROTEIN RAPZ"/>
    <property type="match status" value="1"/>
</dbReference>
<dbReference type="PANTHER" id="PTHR30448:SF0">
    <property type="entry name" value="RNASE ADAPTER PROTEIN RAPZ"/>
    <property type="match status" value="1"/>
</dbReference>
<dbReference type="Pfam" id="PF22740">
    <property type="entry name" value="PapZ_C"/>
    <property type="match status" value="1"/>
</dbReference>
<dbReference type="Pfam" id="PF03668">
    <property type="entry name" value="RapZ-like_N"/>
    <property type="match status" value="1"/>
</dbReference>
<dbReference type="PIRSF" id="PIRSF005052">
    <property type="entry name" value="P-loopkin"/>
    <property type="match status" value="1"/>
</dbReference>
<dbReference type="SUPFAM" id="SSF52540">
    <property type="entry name" value="P-loop containing nucleoside triphosphate hydrolases"/>
    <property type="match status" value="1"/>
</dbReference>
<evidence type="ECO:0000255" key="1">
    <source>
        <dbReference type="HAMAP-Rule" id="MF_00636"/>
    </source>
</evidence>
<accession>Q8PIC2</accession>
<proteinExistence type="inferred from homology"/>
<reference key="1">
    <citation type="journal article" date="2002" name="Nature">
        <title>Comparison of the genomes of two Xanthomonas pathogens with differing host specificities.</title>
        <authorList>
            <person name="da Silva A.C.R."/>
            <person name="Ferro J.A."/>
            <person name="Reinach F.C."/>
            <person name="Farah C.S."/>
            <person name="Furlan L.R."/>
            <person name="Quaggio R.B."/>
            <person name="Monteiro-Vitorello C.B."/>
            <person name="Van Sluys M.A."/>
            <person name="Almeida N.F. Jr."/>
            <person name="Alves L.M.C."/>
            <person name="do Amaral A.M."/>
            <person name="Bertolini M.C."/>
            <person name="Camargo L.E.A."/>
            <person name="Camarotte G."/>
            <person name="Cannavan F."/>
            <person name="Cardozo J."/>
            <person name="Chambergo F."/>
            <person name="Ciapina L.P."/>
            <person name="Cicarelli R.M.B."/>
            <person name="Coutinho L.L."/>
            <person name="Cursino-Santos J.R."/>
            <person name="El-Dorry H."/>
            <person name="Faria J.B."/>
            <person name="Ferreira A.J.S."/>
            <person name="Ferreira R.C.C."/>
            <person name="Ferro M.I.T."/>
            <person name="Formighieri E.F."/>
            <person name="Franco M.C."/>
            <person name="Greggio C.C."/>
            <person name="Gruber A."/>
            <person name="Katsuyama A.M."/>
            <person name="Kishi L.T."/>
            <person name="Leite R.P."/>
            <person name="Lemos E.G.M."/>
            <person name="Lemos M.V.F."/>
            <person name="Locali E.C."/>
            <person name="Machado M.A."/>
            <person name="Madeira A.M.B.N."/>
            <person name="Martinez-Rossi N.M."/>
            <person name="Martins E.C."/>
            <person name="Meidanis J."/>
            <person name="Menck C.F.M."/>
            <person name="Miyaki C.Y."/>
            <person name="Moon D.H."/>
            <person name="Moreira L.M."/>
            <person name="Novo M.T.M."/>
            <person name="Okura V.K."/>
            <person name="Oliveira M.C."/>
            <person name="Oliveira V.R."/>
            <person name="Pereira H.A."/>
            <person name="Rossi A."/>
            <person name="Sena J.A.D."/>
            <person name="Silva C."/>
            <person name="de Souza R.F."/>
            <person name="Spinola L.A.F."/>
            <person name="Takita M.A."/>
            <person name="Tamura R.E."/>
            <person name="Teixeira E.C."/>
            <person name="Tezza R.I.D."/>
            <person name="Trindade dos Santos M."/>
            <person name="Truffi D."/>
            <person name="Tsai S.M."/>
            <person name="White F.F."/>
            <person name="Setubal J.C."/>
            <person name="Kitajima J.P."/>
        </authorList>
    </citation>
    <scope>NUCLEOTIDE SEQUENCE [LARGE SCALE GENOMIC DNA]</scope>
    <source>
        <strain>306</strain>
    </source>
</reference>
<feature type="chain" id="PRO_0000107789" description="Nucleotide-binding protein XAC2976">
    <location>
        <begin position="1"/>
        <end position="282"/>
    </location>
</feature>
<feature type="binding site" evidence="1">
    <location>
        <begin position="5"/>
        <end position="12"/>
    </location>
    <ligand>
        <name>ATP</name>
        <dbReference type="ChEBI" id="CHEBI:30616"/>
    </ligand>
</feature>
<feature type="binding site" evidence="1">
    <location>
        <begin position="57"/>
        <end position="60"/>
    </location>
    <ligand>
        <name>GTP</name>
        <dbReference type="ChEBI" id="CHEBI:37565"/>
    </ligand>
</feature>
<comment type="function">
    <text evidence="1">Displays ATPase and GTPase activities.</text>
</comment>
<comment type="similarity">
    <text evidence="1">Belongs to the RapZ-like family.</text>
</comment>
<gene>
    <name type="ordered locus">XAC2976</name>
</gene>
<protein>
    <recommendedName>
        <fullName evidence="1">Nucleotide-binding protein XAC2976</fullName>
    </recommendedName>
</protein>
<name>Y2976_XANAC</name>
<keyword id="KW-0067">ATP-binding</keyword>
<keyword id="KW-0342">GTP-binding</keyword>
<keyword id="KW-0547">Nucleotide-binding</keyword>
<sequence>MIVSGLSGSGKSVALKTFEDLDYYCSDNLPVELLPDFVKSRLRGNPVGDQRLAVGIDVRSRSDLTQLAQWRQAAQEYGIEARLLFFEASDEALIKRYADTRRRHPLSHLGLALPEAITRERQLTEPLRTQADAVIDTSTLNVHQLRRRVVTEFALGSHDRLSLLFESFAYKRGVPAEADFVFDARVLPNPHWDPELRPLTGRDAGVREYLDNEADVQRYSAQIVDLLDTWLPRLRNDTRSYVTIAFGCTGGKHRSVYMAERMARHAREQGWPEVATFHREQD</sequence>
<organism>
    <name type="scientific">Xanthomonas axonopodis pv. citri (strain 306)</name>
    <dbReference type="NCBI Taxonomy" id="190486"/>
    <lineage>
        <taxon>Bacteria</taxon>
        <taxon>Pseudomonadati</taxon>
        <taxon>Pseudomonadota</taxon>
        <taxon>Gammaproteobacteria</taxon>
        <taxon>Lysobacterales</taxon>
        <taxon>Lysobacteraceae</taxon>
        <taxon>Xanthomonas</taxon>
    </lineage>
</organism>